<sequence length="100" mass="11025">MQLNPTEKDKLLLFTAGMVAERRKNRGVKLNYPESIAYISMLLMEGARDGKTVAQLMSEGATYLSANDVMEGIAEMIHDVQVEATFPDGTKLVTVHNPIV</sequence>
<feature type="chain" id="PRO_0000239908" description="Urease subunit gamma 2">
    <location>
        <begin position="1"/>
        <end position="100"/>
    </location>
</feature>
<proteinExistence type="inferred from homology"/>
<protein>
    <recommendedName>
        <fullName evidence="1">Urease subunit gamma 2</fullName>
        <ecNumber evidence="1">3.5.1.5</ecNumber>
    </recommendedName>
    <alternativeName>
        <fullName evidence="1">Urea amidohydrolase subunit gamma 2</fullName>
    </alternativeName>
</protein>
<dbReference type="EC" id="3.5.1.5" evidence="1"/>
<dbReference type="EMBL" id="CP000323">
    <property type="protein sequence ID" value="ABE74769.1"/>
    <property type="molecule type" value="Genomic_DNA"/>
</dbReference>
<dbReference type="SMR" id="Q1QC34"/>
<dbReference type="STRING" id="335284.Pcryo_0988"/>
<dbReference type="KEGG" id="pcr:Pcryo_0988"/>
<dbReference type="eggNOG" id="COG0831">
    <property type="taxonomic scope" value="Bacteria"/>
</dbReference>
<dbReference type="HOGENOM" id="CLU_145825_1_0_6"/>
<dbReference type="UniPathway" id="UPA00258">
    <property type="reaction ID" value="UER00370"/>
</dbReference>
<dbReference type="Proteomes" id="UP000002425">
    <property type="component" value="Chromosome"/>
</dbReference>
<dbReference type="GO" id="GO:0005737">
    <property type="term" value="C:cytoplasm"/>
    <property type="evidence" value="ECO:0007669"/>
    <property type="project" value="UniProtKB-SubCell"/>
</dbReference>
<dbReference type="GO" id="GO:0016151">
    <property type="term" value="F:nickel cation binding"/>
    <property type="evidence" value="ECO:0007669"/>
    <property type="project" value="InterPro"/>
</dbReference>
<dbReference type="GO" id="GO:0009039">
    <property type="term" value="F:urease activity"/>
    <property type="evidence" value="ECO:0007669"/>
    <property type="project" value="UniProtKB-UniRule"/>
</dbReference>
<dbReference type="GO" id="GO:0043419">
    <property type="term" value="P:urea catabolic process"/>
    <property type="evidence" value="ECO:0007669"/>
    <property type="project" value="UniProtKB-UniRule"/>
</dbReference>
<dbReference type="CDD" id="cd00390">
    <property type="entry name" value="Urease_gamma"/>
    <property type="match status" value="1"/>
</dbReference>
<dbReference type="Gene3D" id="3.30.280.10">
    <property type="entry name" value="Urease, gamma-like subunit"/>
    <property type="match status" value="1"/>
</dbReference>
<dbReference type="HAMAP" id="MF_00739">
    <property type="entry name" value="Urease_gamma"/>
    <property type="match status" value="1"/>
</dbReference>
<dbReference type="InterPro" id="IPR012010">
    <property type="entry name" value="Urease_gamma"/>
</dbReference>
<dbReference type="InterPro" id="IPR002026">
    <property type="entry name" value="Urease_gamma/gamma-beta_su"/>
</dbReference>
<dbReference type="InterPro" id="IPR036463">
    <property type="entry name" value="Urease_gamma_sf"/>
</dbReference>
<dbReference type="InterPro" id="IPR050069">
    <property type="entry name" value="Urease_subunit"/>
</dbReference>
<dbReference type="NCBIfam" id="NF009712">
    <property type="entry name" value="PRK13241.1"/>
    <property type="match status" value="1"/>
</dbReference>
<dbReference type="NCBIfam" id="TIGR00193">
    <property type="entry name" value="urease_gam"/>
    <property type="match status" value="1"/>
</dbReference>
<dbReference type="PANTHER" id="PTHR33569">
    <property type="entry name" value="UREASE"/>
    <property type="match status" value="1"/>
</dbReference>
<dbReference type="PANTHER" id="PTHR33569:SF1">
    <property type="entry name" value="UREASE"/>
    <property type="match status" value="1"/>
</dbReference>
<dbReference type="Pfam" id="PF00547">
    <property type="entry name" value="Urease_gamma"/>
    <property type="match status" value="1"/>
</dbReference>
<dbReference type="PIRSF" id="PIRSF001223">
    <property type="entry name" value="Urease_gamma"/>
    <property type="match status" value="1"/>
</dbReference>
<dbReference type="SUPFAM" id="SSF54111">
    <property type="entry name" value="Urease, gamma-subunit"/>
    <property type="match status" value="1"/>
</dbReference>
<gene>
    <name evidence="1" type="primary">ureA2</name>
    <name type="ordered locus">Pcryo_0988</name>
</gene>
<reference key="1">
    <citation type="submission" date="2006-03" db="EMBL/GenBank/DDBJ databases">
        <title>Complete sequence of chromosome of Psychrobacter cryohalolentis K5.</title>
        <authorList>
            <consortium name="US DOE Joint Genome Institute"/>
            <person name="Copeland A."/>
            <person name="Lucas S."/>
            <person name="Lapidus A."/>
            <person name="Barry K."/>
            <person name="Detter J.C."/>
            <person name="Glavina T."/>
            <person name="Hammon N."/>
            <person name="Israni S."/>
            <person name="Dalin E."/>
            <person name="Tice H."/>
            <person name="Pitluck S."/>
            <person name="Brettin T."/>
            <person name="Bruce D."/>
            <person name="Han C."/>
            <person name="Tapia R."/>
            <person name="Sims D.R."/>
            <person name="Gilna P."/>
            <person name="Schmutz J."/>
            <person name="Larimer F."/>
            <person name="Land M."/>
            <person name="Hauser L."/>
            <person name="Kyrpides N."/>
            <person name="Kim E."/>
            <person name="Richardson P."/>
        </authorList>
    </citation>
    <scope>NUCLEOTIDE SEQUENCE [LARGE SCALE GENOMIC DNA]</scope>
    <source>
        <strain>ATCC BAA-1226 / DSM 17306 / VKM B-2378 / K5</strain>
    </source>
</reference>
<organism>
    <name type="scientific">Psychrobacter cryohalolentis (strain ATCC BAA-1226 / DSM 17306 / VKM B-2378 / K5)</name>
    <dbReference type="NCBI Taxonomy" id="335284"/>
    <lineage>
        <taxon>Bacteria</taxon>
        <taxon>Pseudomonadati</taxon>
        <taxon>Pseudomonadota</taxon>
        <taxon>Gammaproteobacteria</taxon>
        <taxon>Moraxellales</taxon>
        <taxon>Moraxellaceae</taxon>
        <taxon>Psychrobacter</taxon>
    </lineage>
</organism>
<keyword id="KW-0963">Cytoplasm</keyword>
<keyword id="KW-0378">Hydrolase</keyword>
<evidence type="ECO:0000255" key="1">
    <source>
        <dbReference type="HAMAP-Rule" id="MF_00739"/>
    </source>
</evidence>
<comment type="catalytic activity">
    <reaction evidence="1">
        <text>urea + 2 H2O + H(+) = hydrogencarbonate + 2 NH4(+)</text>
        <dbReference type="Rhea" id="RHEA:20557"/>
        <dbReference type="ChEBI" id="CHEBI:15377"/>
        <dbReference type="ChEBI" id="CHEBI:15378"/>
        <dbReference type="ChEBI" id="CHEBI:16199"/>
        <dbReference type="ChEBI" id="CHEBI:17544"/>
        <dbReference type="ChEBI" id="CHEBI:28938"/>
        <dbReference type="EC" id="3.5.1.5"/>
    </reaction>
</comment>
<comment type="pathway">
    <text evidence="1">Nitrogen metabolism; urea degradation; CO(2) and NH(3) from urea (urease route): step 1/1.</text>
</comment>
<comment type="subunit">
    <text evidence="1">Heterotrimer of UreA (gamma), UreB (beta) and UreC (alpha) subunits. Three heterotrimers associate to form the active enzyme.</text>
</comment>
<comment type="subcellular location">
    <subcellularLocation>
        <location evidence="1">Cytoplasm</location>
    </subcellularLocation>
</comment>
<comment type="similarity">
    <text evidence="1">Belongs to the urease gamma subunit family.</text>
</comment>
<accession>Q1QC34</accession>
<name>URE32_PSYCK</name>